<proteinExistence type="inferred from homology"/>
<gene>
    <name type="primary">gluD</name>
    <name type="synonym">gudB</name>
    <name type="ordered locus">SAV0958</name>
</gene>
<dbReference type="EC" id="1.4.1.2"/>
<dbReference type="EMBL" id="BA000017">
    <property type="protein sequence ID" value="BAB57120.1"/>
    <property type="molecule type" value="Genomic_DNA"/>
</dbReference>
<dbReference type="RefSeq" id="WP_000138487.1">
    <property type="nucleotide sequence ID" value="NC_002758.2"/>
</dbReference>
<dbReference type="SMR" id="Q99VD0"/>
<dbReference type="KEGG" id="sav:SAV0958"/>
<dbReference type="HOGENOM" id="CLU_025763_1_2_9"/>
<dbReference type="PhylomeDB" id="Q99VD0"/>
<dbReference type="Proteomes" id="UP000002481">
    <property type="component" value="Chromosome"/>
</dbReference>
<dbReference type="GO" id="GO:0004352">
    <property type="term" value="F:glutamate dehydrogenase (NAD+) activity"/>
    <property type="evidence" value="ECO:0000250"/>
    <property type="project" value="UniProtKB"/>
</dbReference>
<dbReference type="GO" id="GO:0006520">
    <property type="term" value="P:amino acid metabolic process"/>
    <property type="evidence" value="ECO:0000250"/>
    <property type="project" value="UniProtKB"/>
</dbReference>
<dbReference type="GO" id="GO:0006538">
    <property type="term" value="P:glutamate catabolic process"/>
    <property type="evidence" value="ECO:0007669"/>
    <property type="project" value="TreeGrafter"/>
</dbReference>
<dbReference type="CDD" id="cd01076">
    <property type="entry name" value="NAD_bind_1_Glu_DH"/>
    <property type="match status" value="1"/>
</dbReference>
<dbReference type="FunFam" id="3.40.50.10860:FF:000008">
    <property type="entry name" value="Glutamate dehydrogenase"/>
    <property type="match status" value="1"/>
</dbReference>
<dbReference type="FunFam" id="3.40.50.720:FF:000242">
    <property type="entry name" value="Glutamate dehydrogenase"/>
    <property type="match status" value="1"/>
</dbReference>
<dbReference type="Gene3D" id="1.10.8.1210">
    <property type="match status" value="2"/>
</dbReference>
<dbReference type="Gene3D" id="3.40.50.10860">
    <property type="entry name" value="Leucine Dehydrogenase, chain A, domain 1"/>
    <property type="match status" value="1"/>
</dbReference>
<dbReference type="Gene3D" id="3.40.50.720">
    <property type="entry name" value="NAD(P)-binding Rossmann-like Domain"/>
    <property type="match status" value="1"/>
</dbReference>
<dbReference type="InterPro" id="IPR046346">
    <property type="entry name" value="Aminoacid_DH-like_N_sf"/>
</dbReference>
<dbReference type="InterPro" id="IPR006095">
    <property type="entry name" value="Glu/Leu/Phe/Val/Trp_DH"/>
</dbReference>
<dbReference type="InterPro" id="IPR006096">
    <property type="entry name" value="Glu/Leu/Phe/Val/Trp_DH_C"/>
</dbReference>
<dbReference type="InterPro" id="IPR006097">
    <property type="entry name" value="Glu/Leu/Phe/Val/Trp_DH_dimer"/>
</dbReference>
<dbReference type="InterPro" id="IPR033524">
    <property type="entry name" value="Glu/Leu/Phe/Val_DH_AS"/>
</dbReference>
<dbReference type="InterPro" id="IPR014362">
    <property type="entry name" value="Glu_DH"/>
</dbReference>
<dbReference type="InterPro" id="IPR036291">
    <property type="entry name" value="NAD(P)-bd_dom_sf"/>
</dbReference>
<dbReference type="InterPro" id="IPR033922">
    <property type="entry name" value="NAD_bind_Glu_DH"/>
</dbReference>
<dbReference type="PANTHER" id="PTHR11606">
    <property type="entry name" value="GLUTAMATE DEHYDROGENASE"/>
    <property type="match status" value="1"/>
</dbReference>
<dbReference type="PANTHER" id="PTHR11606:SF13">
    <property type="entry name" value="GLUTAMATE DEHYDROGENASE 1, MITOCHONDRIAL"/>
    <property type="match status" value="1"/>
</dbReference>
<dbReference type="Pfam" id="PF00208">
    <property type="entry name" value="ELFV_dehydrog"/>
    <property type="match status" value="1"/>
</dbReference>
<dbReference type="Pfam" id="PF02812">
    <property type="entry name" value="ELFV_dehydrog_N"/>
    <property type="match status" value="1"/>
</dbReference>
<dbReference type="PIRSF" id="PIRSF000185">
    <property type="entry name" value="Glu_DH"/>
    <property type="match status" value="1"/>
</dbReference>
<dbReference type="PRINTS" id="PR00082">
    <property type="entry name" value="GLFDHDRGNASE"/>
</dbReference>
<dbReference type="SMART" id="SM00839">
    <property type="entry name" value="ELFV_dehydrog"/>
    <property type="match status" value="1"/>
</dbReference>
<dbReference type="SUPFAM" id="SSF53223">
    <property type="entry name" value="Aminoacid dehydrogenase-like, N-terminal domain"/>
    <property type="match status" value="1"/>
</dbReference>
<dbReference type="SUPFAM" id="SSF51735">
    <property type="entry name" value="NAD(P)-binding Rossmann-fold domains"/>
    <property type="match status" value="1"/>
</dbReference>
<dbReference type="PROSITE" id="PS00074">
    <property type="entry name" value="GLFV_DEHYDROGENASE"/>
    <property type="match status" value="1"/>
</dbReference>
<keyword id="KW-0520">NAD</keyword>
<keyword id="KW-0560">Oxidoreductase</keyword>
<feature type="chain" id="PRO_0000223327" description="NAD-specific glutamate dehydrogenase">
    <location>
        <begin position="1"/>
        <end position="414"/>
    </location>
</feature>
<feature type="active site" description="Proton donor" evidence="2">
    <location>
        <position position="106"/>
    </location>
</feature>
<feature type="binding site" evidence="1">
    <location>
        <position position="70"/>
    </location>
    <ligand>
        <name>substrate</name>
    </ligand>
</feature>
<feature type="binding site" evidence="1">
    <location>
        <position position="94"/>
    </location>
    <ligand>
        <name>substrate</name>
    </ligand>
</feature>
<feature type="binding site" evidence="1">
    <location>
        <position position="190"/>
    </location>
    <ligand>
        <name>NAD(+)</name>
        <dbReference type="ChEBI" id="CHEBI:57540"/>
    </ligand>
</feature>
<feature type="binding site" evidence="1">
    <location>
        <position position="221"/>
    </location>
    <ligand>
        <name>NAD(+)</name>
        <dbReference type="ChEBI" id="CHEBI:57540"/>
    </ligand>
</feature>
<feature type="binding site" evidence="1">
    <location>
        <position position="348"/>
    </location>
    <ligand>
        <name>substrate</name>
    </ligand>
</feature>
<feature type="site" description="Important for catalysis" evidence="1">
    <location>
        <position position="146"/>
    </location>
</feature>
<organism>
    <name type="scientific">Staphylococcus aureus (strain Mu50 / ATCC 700699)</name>
    <dbReference type="NCBI Taxonomy" id="158878"/>
    <lineage>
        <taxon>Bacteria</taxon>
        <taxon>Bacillati</taxon>
        <taxon>Bacillota</taxon>
        <taxon>Bacilli</taxon>
        <taxon>Bacillales</taxon>
        <taxon>Staphylococcaceae</taxon>
        <taxon>Staphylococcus</taxon>
    </lineage>
</organism>
<name>DHE2_STAAM</name>
<evidence type="ECO:0000250" key="1"/>
<evidence type="ECO:0000255" key="2">
    <source>
        <dbReference type="PROSITE-ProRule" id="PRU10011"/>
    </source>
</evidence>
<evidence type="ECO:0000305" key="3"/>
<protein>
    <recommendedName>
        <fullName>NAD-specific glutamate dehydrogenase</fullName>
        <shortName>NAD-GDH</shortName>
        <ecNumber>1.4.1.2</ecNumber>
    </recommendedName>
</protein>
<reference key="1">
    <citation type="journal article" date="2001" name="Lancet">
        <title>Whole genome sequencing of meticillin-resistant Staphylococcus aureus.</title>
        <authorList>
            <person name="Kuroda M."/>
            <person name="Ohta T."/>
            <person name="Uchiyama I."/>
            <person name="Baba T."/>
            <person name="Yuzawa H."/>
            <person name="Kobayashi I."/>
            <person name="Cui L."/>
            <person name="Oguchi A."/>
            <person name="Aoki K."/>
            <person name="Nagai Y."/>
            <person name="Lian J.-Q."/>
            <person name="Ito T."/>
            <person name="Kanamori M."/>
            <person name="Matsumaru H."/>
            <person name="Maruyama A."/>
            <person name="Murakami H."/>
            <person name="Hosoyama A."/>
            <person name="Mizutani-Ui Y."/>
            <person name="Takahashi N.K."/>
            <person name="Sawano T."/>
            <person name="Inoue R."/>
            <person name="Kaito C."/>
            <person name="Sekimizu K."/>
            <person name="Hirakawa H."/>
            <person name="Kuhara S."/>
            <person name="Goto S."/>
            <person name="Yabuzaki J."/>
            <person name="Kanehisa M."/>
            <person name="Yamashita A."/>
            <person name="Oshima K."/>
            <person name="Furuya K."/>
            <person name="Yoshino C."/>
            <person name="Shiba T."/>
            <person name="Hattori M."/>
            <person name="Ogasawara N."/>
            <person name="Hayashi H."/>
            <person name="Hiramatsu K."/>
        </authorList>
    </citation>
    <scope>NUCLEOTIDE SEQUENCE [LARGE SCALE GENOMIC DNA]</scope>
    <source>
        <strain>Mu50 / ATCC 700699</strain>
    </source>
</reference>
<comment type="catalytic activity">
    <reaction>
        <text>L-glutamate + NAD(+) + H2O = 2-oxoglutarate + NH4(+) + NADH + H(+)</text>
        <dbReference type="Rhea" id="RHEA:15133"/>
        <dbReference type="ChEBI" id="CHEBI:15377"/>
        <dbReference type="ChEBI" id="CHEBI:15378"/>
        <dbReference type="ChEBI" id="CHEBI:16810"/>
        <dbReference type="ChEBI" id="CHEBI:28938"/>
        <dbReference type="ChEBI" id="CHEBI:29985"/>
        <dbReference type="ChEBI" id="CHEBI:57540"/>
        <dbReference type="ChEBI" id="CHEBI:57945"/>
        <dbReference type="EC" id="1.4.1.2"/>
    </reaction>
</comment>
<comment type="subunit">
    <text evidence="1">Homohexamer.</text>
</comment>
<comment type="similarity">
    <text evidence="3">Belongs to the Glu/Leu/Phe/Val dehydrogenases family.</text>
</comment>
<sequence>MTENNNLVTSTQGIIKEALHKLGFDEGMYDLIKEPLRMLQVRIPVRMDDGTVKTFTGYRAQHNDAVGPTKGGVRFHPDVDEEEVKALSMWMTLKCGIVNLPYGGGKGGIVCDPRQMSIHEVERLSRGYVRAISQFVGPNKDIPAPDVFTNSQIMAWMMDEYSALDKFNSPGFITGKPIVLGGSHGRDRSTALGVVIAIEQAAKRRNMQIEGAKVVIQGFGNAGSFLAKFLYDLGAKIVGISDAYGALHDPNGLDIDYLLDRRDSFGTVTNLFEETISNKELFELDCDILVPAAISNQITEDNAHDIKASIVVEAANGPTTPEATRILTERGILLVPDVLASAGGVTVSYFEWVQNNQGYYWSEEEVNEKLREKLEAAFDTIYELSQNRKIDMRLAAYIIGIKRTAEAARYRGWA</sequence>
<accession>Q99VD0</accession>